<protein>
    <recommendedName>
        <fullName evidence="1">Phosphomethylpyrimidine synthase</fullName>
        <ecNumber evidence="1">4.1.99.17</ecNumber>
    </recommendedName>
    <alternativeName>
        <fullName evidence="1">Hydroxymethylpyrimidine phosphate synthase</fullName>
        <shortName evidence="1">HMP-P synthase</shortName>
        <shortName evidence="1">HMP-phosphate synthase</shortName>
        <shortName evidence="1">HMPP synthase</shortName>
    </alternativeName>
    <alternativeName>
        <fullName evidence="1">Thiamine biosynthesis protein ThiC</fullName>
    </alternativeName>
</protein>
<feature type="chain" id="PRO_1000118506" description="Phosphomethylpyrimidine synthase">
    <location>
        <begin position="1"/>
        <end position="458"/>
    </location>
</feature>
<feature type="binding site" evidence="1">
    <location>
        <position position="80"/>
    </location>
    <ligand>
        <name>substrate</name>
    </ligand>
</feature>
<feature type="binding site" evidence="1">
    <location>
        <position position="109"/>
    </location>
    <ligand>
        <name>substrate</name>
    </ligand>
</feature>
<feature type="binding site" evidence="1">
    <location>
        <position position="139"/>
    </location>
    <ligand>
        <name>substrate</name>
    </ligand>
</feature>
<feature type="binding site" evidence="1">
    <location>
        <position position="175"/>
    </location>
    <ligand>
        <name>substrate</name>
    </ligand>
</feature>
<feature type="binding site" evidence="1">
    <location>
        <begin position="195"/>
        <end position="197"/>
    </location>
    <ligand>
        <name>substrate</name>
    </ligand>
</feature>
<feature type="binding site" evidence="1">
    <location>
        <begin position="236"/>
        <end position="239"/>
    </location>
    <ligand>
        <name>substrate</name>
    </ligand>
</feature>
<feature type="binding site" evidence="1">
    <location>
        <position position="275"/>
    </location>
    <ligand>
        <name>substrate</name>
    </ligand>
</feature>
<feature type="binding site" evidence="1">
    <location>
        <position position="279"/>
    </location>
    <ligand>
        <name>Zn(2+)</name>
        <dbReference type="ChEBI" id="CHEBI:29105"/>
    </ligand>
</feature>
<feature type="binding site" evidence="1">
    <location>
        <position position="302"/>
    </location>
    <ligand>
        <name>substrate</name>
    </ligand>
</feature>
<feature type="binding site" evidence="1">
    <location>
        <position position="343"/>
    </location>
    <ligand>
        <name>Zn(2+)</name>
        <dbReference type="ChEBI" id="CHEBI:29105"/>
    </ligand>
</feature>
<feature type="binding site" evidence="1">
    <location>
        <position position="423"/>
    </location>
    <ligand>
        <name>[4Fe-4S] cluster</name>
        <dbReference type="ChEBI" id="CHEBI:49883"/>
        <note>4Fe-4S-S-AdoMet</note>
    </ligand>
</feature>
<feature type="binding site" evidence="1">
    <location>
        <position position="426"/>
    </location>
    <ligand>
        <name>[4Fe-4S] cluster</name>
        <dbReference type="ChEBI" id="CHEBI:49883"/>
        <note>4Fe-4S-S-AdoMet</note>
    </ligand>
</feature>
<feature type="binding site" evidence="1">
    <location>
        <position position="431"/>
    </location>
    <ligand>
        <name>[4Fe-4S] cluster</name>
        <dbReference type="ChEBI" id="CHEBI:49883"/>
        <note>4Fe-4S-S-AdoMet</note>
    </ligand>
</feature>
<name>THIC_CYAP4</name>
<keyword id="KW-0004">4Fe-4S</keyword>
<keyword id="KW-0408">Iron</keyword>
<keyword id="KW-0411">Iron-sulfur</keyword>
<keyword id="KW-0456">Lyase</keyword>
<keyword id="KW-0479">Metal-binding</keyword>
<keyword id="KW-0949">S-adenosyl-L-methionine</keyword>
<keyword id="KW-0784">Thiamine biosynthesis</keyword>
<keyword id="KW-0862">Zinc</keyword>
<organism>
    <name type="scientific">Cyanothece sp. (strain PCC 7425 / ATCC 29141)</name>
    <dbReference type="NCBI Taxonomy" id="395961"/>
    <lineage>
        <taxon>Bacteria</taxon>
        <taxon>Bacillati</taxon>
        <taxon>Cyanobacteriota</taxon>
        <taxon>Cyanophyceae</taxon>
        <taxon>Gomontiellales</taxon>
        <taxon>Cyanothecaceae</taxon>
        <taxon>Cyanothece</taxon>
    </lineage>
</organism>
<proteinExistence type="inferred from homology"/>
<accession>B8HNW1</accession>
<sequence length="458" mass="51054">MRREWVAKRQGHANVSQMHYARQGIITEEMDYVAKRENLPAELIRDEVARGRMIIPANINHLNLEPMAIGIASKCKVNANIGASPNSSNLEEEVAKLNLAVKYGADTVMDLSTGGGNLDQIRTAIINASPVPIGTVPIYQALESVHGTIEKLTPDDFLHVIEKHAQQGVDYMTIHAGILIEYLPLVRNRITGIVSRGGGIIARWMLHHHKQNPLYTHFRDIIEIFKKYDVSFSLGDSLRPGCQHDASDEAQLSELKTLGQLTRKAWEHNVQVMVEGPGHVPMDQIEFNVRKQMEECSEAPFYVLGPLVTDIAPGYDHITSAIGAALAGWYGTAMLCYVTPKEHLGLPNAEDVRNGLIAYKIAAHAADIARHRPGARDRDDELSKARYNFDWNRQFELALDPDRAREYHDETLPADIYKTAEFCSMCGPKFCPMQTKVDADALTELEKFLAKQPTGTSV</sequence>
<dbReference type="EC" id="4.1.99.17" evidence="1"/>
<dbReference type="EMBL" id="CP001344">
    <property type="protein sequence ID" value="ACL45548.1"/>
    <property type="molecule type" value="Genomic_DNA"/>
</dbReference>
<dbReference type="SMR" id="B8HNW1"/>
<dbReference type="STRING" id="395961.Cyan7425_3220"/>
<dbReference type="KEGG" id="cyn:Cyan7425_3220"/>
<dbReference type="eggNOG" id="COG0422">
    <property type="taxonomic scope" value="Bacteria"/>
</dbReference>
<dbReference type="HOGENOM" id="CLU_013181_2_1_3"/>
<dbReference type="OrthoDB" id="9805897at2"/>
<dbReference type="UniPathway" id="UPA00060"/>
<dbReference type="GO" id="GO:0005829">
    <property type="term" value="C:cytosol"/>
    <property type="evidence" value="ECO:0007669"/>
    <property type="project" value="TreeGrafter"/>
</dbReference>
<dbReference type="GO" id="GO:0051539">
    <property type="term" value="F:4 iron, 4 sulfur cluster binding"/>
    <property type="evidence" value="ECO:0007669"/>
    <property type="project" value="UniProtKB-KW"/>
</dbReference>
<dbReference type="GO" id="GO:0016830">
    <property type="term" value="F:carbon-carbon lyase activity"/>
    <property type="evidence" value="ECO:0007669"/>
    <property type="project" value="InterPro"/>
</dbReference>
<dbReference type="GO" id="GO:0008270">
    <property type="term" value="F:zinc ion binding"/>
    <property type="evidence" value="ECO:0007669"/>
    <property type="project" value="UniProtKB-UniRule"/>
</dbReference>
<dbReference type="GO" id="GO:0009228">
    <property type="term" value="P:thiamine biosynthetic process"/>
    <property type="evidence" value="ECO:0007669"/>
    <property type="project" value="UniProtKB-KW"/>
</dbReference>
<dbReference type="GO" id="GO:0009229">
    <property type="term" value="P:thiamine diphosphate biosynthetic process"/>
    <property type="evidence" value="ECO:0007669"/>
    <property type="project" value="UniProtKB-UniRule"/>
</dbReference>
<dbReference type="FunFam" id="3.20.20.540:FF:000001">
    <property type="entry name" value="Phosphomethylpyrimidine synthase"/>
    <property type="match status" value="1"/>
</dbReference>
<dbReference type="Gene3D" id="6.10.250.620">
    <property type="match status" value="1"/>
</dbReference>
<dbReference type="Gene3D" id="3.20.20.540">
    <property type="entry name" value="Radical SAM ThiC family, central domain"/>
    <property type="match status" value="1"/>
</dbReference>
<dbReference type="HAMAP" id="MF_00089">
    <property type="entry name" value="ThiC"/>
    <property type="match status" value="1"/>
</dbReference>
<dbReference type="InterPro" id="IPR037509">
    <property type="entry name" value="ThiC"/>
</dbReference>
<dbReference type="InterPro" id="IPR038521">
    <property type="entry name" value="ThiC/Bza_core_dom"/>
</dbReference>
<dbReference type="InterPro" id="IPR002817">
    <property type="entry name" value="ThiC/BzaA/B"/>
</dbReference>
<dbReference type="NCBIfam" id="NF006763">
    <property type="entry name" value="PRK09284.1"/>
    <property type="match status" value="1"/>
</dbReference>
<dbReference type="NCBIfam" id="NF009895">
    <property type="entry name" value="PRK13352.1"/>
    <property type="match status" value="1"/>
</dbReference>
<dbReference type="NCBIfam" id="TIGR00190">
    <property type="entry name" value="thiC"/>
    <property type="match status" value="1"/>
</dbReference>
<dbReference type="PANTHER" id="PTHR30557:SF1">
    <property type="entry name" value="PHOSPHOMETHYLPYRIMIDINE SYNTHASE, CHLOROPLASTIC"/>
    <property type="match status" value="1"/>
</dbReference>
<dbReference type="PANTHER" id="PTHR30557">
    <property type="entry name" value="THIAMINE BIOSYNTHESIS PROTEIN THIC"/>
    <property type="match status" value="1"/>
</dbReference>
<dbReference type="Pfam" id="PF01964">
    <property type="entry name" value="ThiC_Rad_SAM"/>
    <property type="match status" value="1"/>
</dbReference>
<dbReference type="SFLD" id="SFLDF00407">
    <property type="entry name" value="phosphomethylpyrimidine_syntha"/>
    <property type="match status" value="1"/>
</dbReference>
<dbReference type="SFLD" id="SFLDG01114">
    <property type="entry name" value="phosphomethylpyrimidine_syntha"/>
    <property type="match status" value="1"/>
</dbReference>
<dbReference type="SFLD" id="SFLDS00113">
    <property type="entry name" value="Radical_SAM_Phosphomethylpyrim"/>
    <property type="match status" value="1"/>
</dbReference>
<evidence type="ECO:0000255" key="1">
    <source>
        <dbReference type="HAMAP-Rule" id="MF_00089"/>
    </source>
</evidence>
<comment type="function">
    <text evidence="1">Catalyzes the synthesis of the hydroxymethylpyrimidine phosphate (HMP-P) moiety of thiamine from aminoimidazole ribotide (AIR) in a radical S-adenosyl-L-methionine (SAM)-dependent reaction.</text>
</comment>
<comment type="catalytic activity">
    <reaction evidence="1">
        <text>5-amino-1-(5-phospho-beta-D-ribosyl)imidazole + S-adenosyl-L-methionine = 4-amino-2-methyl-5-(phosphooxymethyl)pyrimidine + CO + 5'-deoxyadenosine + formate + L-methionine + 3 H(+)</text>
        <dbReference type="Rhea" id="RHEA:24840"/>
        <dbReference type="ChEBI" id="CHEBI:15378"/>
        <dbReference type="ChEBI" id="CHEBI:15740"/>
        <dbReference type="ChEBI" id="CHEBI:17245"/>
        <dbReference type="ChEBI" id="CHEBI:17319"/>
        <dbReference type="ChEBI" id="CHEBI:57844"/>
        <dbReference type="ChEBI" id="CHEBI:58354"/>
        <dbReference type="ChEBI" id="CHEBI:59789"/>
        <dbReference type="ChEBI" id="CHEBI:137981"/>
        <dbReference type="EC" id="4.1.99.17"/>
    </reaction>
</comment>
<comment type="cofactor">
    <cofactor evidence="1">
        <name>[4Fe-4S] cluster</name>
        <dbReference type="ChEBI" id="CHEBI:49883"/>
    </cofactor>
    <text evidence="1">Binds 1 [4Fe-4S] cluster per subunit. The cluster is coordinated with 3 cysteines and an exchangeable S-adenosyl-L-methionine.</text>
</comment>
<comment type="pathway">
    <text evidence="1">Cofactor biosynthesis; thiamine diphosphate biosynthesis.</text>
</comment>
<comment type="similarity">
    <text evidence="1">Belongs to the ThiC family.</text>
</comment>
<gene>
    <name evidence="1" type="primary">thiC</name>
    <name type="ordered locus">Cyan7425_3220</name>
</gene>
<reference key="1">
    <citation type="journal article" date="2011" name="MBio">
        <title>Novel metabolic attributes of the genus Cyanothece, comprising a group of unicellular nitrogen-fixing Cyanobacteria.</title>
        <authorList>
            <person name="Bandyopadhyay A."/>
            <person name="Elvitigala T."/>
            <person name="Welsh E."/>
            <person name="Stockel J."/>
            <person name="Liberton M."/>
            <person name="Min H."/>
            <person name="Sherman L.A."/>
            <person name="Pakrasi H.B."/>
        </authorList>
    </citation>
    <scope>NUCLEOTIDE SEQUENCE [LARGE SCALE GENOMIC DNA]</scope>
    <source>
        <strain>PCC 7425 / ATCC 29141</strain>
    </source>
</reference>